<organism>
    <name type="scientific">Natranaerobius thermophilus (strain ATCC BAA-1301 / DSM 18059 / JW/NM-WN-LF)</name>
    <dbReference type="NCBI Taxonomy" id="457570"/>
    <lineage>
        <taxon>Bacteria</taxon>
        <taxon>Bacillati</taxon>
        <taxon>Bacillota</taxon>
        <taxon>Clostridia</taxon>
        <taxon>Natranaerobiales</taxon>
        <taxon>Natranaerobiaceae</taxon>
        <taxon>Natranaerobius</taxon>
    </lineage>
</organism>
<gene>
    <name evidence="1" type="primary">der</name>
    <name type="synonym">engA</name>
    <name type="ordered locus">Nther_1630</name>
</gene>
<comment type="function">
    <text evidence="1">GTPase that plays an essential role in the late steps of ribosome biogenesis.</text>
</comment>
<comment type="subunit">
    <text evidence="1">Associates with the 50S ribosomal subunit.</text>
</comment>
<comment type="similarity">
    <text evidence="1">Belongs to the TRAFAC class TrmE-Era-EngA-EngB-Septin-like GTPase superfamily. EngA (Der) GTPase family.</text>
</comment>
<evidence type="ECO:0000255" key="1">
    <source>
        <dbReference type="HAMAP-Rule" id="MF_00195"/>
    </source>
</evidence>
<protein>
    <recommendedName>
        <fullName evidence="1">GTPase Der</fullName>
    </recommendedName>
    <alternativeName>
        <fullName evidence="1">GTP-binding protein EngA</fullName>
    </alternativeName>
</protein>
<sequence length="440" mass="49601">MSVKATVALVGRPNVGKSALFNRIVGQRISIVDDTPGVTRDRIDGKGEWSGHSFNLIDTGGIFDEEDDILKQVVIQAEVAIDEADVIVFVTDGRDGITPADEEVAATLRKTKKPVLVAVNKSEGNYDQYAMEFYQLGFEQVISISALHGTNTGQLLDEIVELLPEQEYEELNYHEDDIMLSVIGRPNVGKSSLINKILNKERLIVSNMPGTTRDAIDTVIEREDQKYVFIDTAGLRKKSKIDERLEKYSVIRSIKGMERSNIALLLIDVTKGILEQDKKIAGLAEEKGKGLIILLNKWDAIEKDGKAGDKYYETVRLELPSVNYAPIMFLSAQTGKNVEKIFPVIDKVSKEHSKRITTADVNRVIEDAVNYTPPPSKKGKRLKIYYATQVRTRPPTFVLFVNNPELMKNSYKRYLQNQLRRAFGFEGTPIRILERVKQRR</sequence>
<proteinExistence type="inferred from homology"/>
<keyword id="KW-0342">GTP-binding</keyword>
<keyword id="KW-0547">Nucleotide-binding</keyword>
<keyword id="KW-1185">Reference proteome</keyword>
<keyword id="KW-0677">Repeat</keyword>
<keyword id="KW-0690">Ribosome biogenesis</keyword>
<accession>B2A4M9</accession>
<feature type="chain" id="PRO_1000118649" description="GTPase Der">
    <location>
        <begin position="1"/>
        <end position="440"/>
    </location>
</feature>
<feature type="domain" description="EngA-type G 1">
    <location>
        <begin position="5"/>
        <end position="167"/>
    </location>
</feature>
<feature type="domain" description="EngA-type G 2">
    <location>
        <begin position="178"/>
        <end position="353"/>
    </location>
</feature>
<feature type="domain" description="KH-like" evidence="1">
    <location>
        <begin position="354"/>
        <end position="438"/>
    </location>
</feature>
<feature type="binding site" evidence="1">
    <location>
        <begin position="11"/>
        <end position="18"/>
    </location>
    <ligand>
        <name>GTP</name>
        <dbReference type="ChEBI" id="CHEBI:37565"/>
        <label>1</label>
    </ligand>
</feature>
<feature type="binding site" evidence="1">
    <location>
        <begin position="58"/>
        <end position="62"/>
    </location>
    <ligand>
        <name>GTP</name>
        <dbReference type="ChEBI" id="CHEBI:37565"/>
        <label>1</label>
    </ligand>
</feature>
<feature type="binding site" evidence="1">
    <location>
        <begin position="120"/>
        <end position="123"/>
    </location>
    <ligand>
        <name>GTP</name>
        <dbReference type="ChEBI" id="CHEBI:37565"/>
        <label>1</label>
    </ligand>
</feature>
<feature type="binding site" evidence="1">
    <location>
        <begin position="184"/>
        <end position="191"/>
    </location>
    <ligand>
        <name>GTP</name>
        <dbReference type="ChEBI" id="CHEBI:37565"/>
        <label>2</label>
    </ligand>
</feature>
<feature type="binding site" evidence="1">
    <location>
        <begin position="231"/>
        <end position="235"/>
    </location>
    <ligand>
        <name>GTP</name>
        <dbReference type="ChEBI" id="CHEBI:37565"/>
        <label>2</label>
    </ligand>
</feature>
<feature type="binding site" evidence="1">
    <location>
        <begin position="296"/>
        <end position="299"/>
    </location>
    <ligand>
        <name>GTP</name>
        <dbReference type="ChEBI" id="CHEBI:37565"/>
        <label>2</label>
    </ligand>
</feature>
<dbReference type="EMBL" id="CP001034">
    <property type="protein sequence ID" value="ACB85204.1"/>
    <property type="molecule type" value="Genomic_DNA"/>
</dbReference>
<dbReference type="RefSeq" id="WP_012448072.1">
    <property type="nucleotide sequence ID" value="NC_010718.1"/>
</dbReference>
<dbReference type="SMR" id="B2A4M9"/>
<dbReference type="FunCoup" id="B2A4M9">
    <property type="interactions" value="380"/>
</dbReference>
<dbReference type="STRING" id="457570.Nther_1630"/>
<dbReference type="KEGG" id="nth:Nther_1630"/>
<dbReference type="eggNOG" id="COG1160">
    <property type="taxonomic scope" value="Bacteria"/>
</dbReference>
<dbReference type="HOGENOM" id="CLU_016077_6_2_9"/>
<dbReference type="InParanoid" id="B2A4M9"/>
<dbReference type="OrthoDB" id="9805918at2"/>
<dbReference type="Proteomes" id="UP000001683">
    <property type="component" value="Chromosome"/>
</dbReference>
<dbReference type="GO" id="GO:0005525">
    <property type="term" value="F:GTP binding"/>
    <property type="evidence" value="ECO:0007669"/>
    <property type="project" value="UniProtKB-UniRule"/>
</dbReference>
<dbReference type="GO" id="GO:0043022">
    <property type="term" value="F:ribosome binding"/>
    <property type="evidence" value="ECO:0007669"/>
    <property type="project" value="TreeGrafter"/>
</dbReference>
<dbReference type="GO" id="GO:0042254">
    <property type="term" value="P:ribosome biogenesis"/>
    <property type="evidence" value="ECO:0007669"/>
    <property type="project" value="UniProtKB-KW"/>
</dbReference>
<dbReference type="CDD" id="cd01894">
    <property type="entry name" value="EngA1"/>
    <property type="match status" value="1"/>
</dbReference>
<dbReference type="CDD" id="cd01895">
    <property type="entry name" value="EngA2"/>
    <property type="match status" value="1"/>
</dbReference>
<dbReference type="FunFam" id="3.30.300.20:FF:000004">
    <property type="entry name" value="GTPase Der"/>
    <property type="match status" value="1"/>
</dbReference>
<dbReference type="FunFam" id="3.40.50.300:FF:000040">
    <property type="entry name" value="GTPase Der"/>
    <property type="match status" value="1"/>
</dbReference>
<dbReference type="FunFam" id="3.40.50.300:FF:000057">
    <property type="entry name" value="GTPase Der"/>
    <property type="match status" value="1"/>
</dbReference>
<dbReference type="Gene3D" id="3.30.300.20">
    <property type="match status" value="1"/>
</dbReference>
<dbReference type="Gene3D" id="3.40.50.300">
    <property type="entry name" value="P-loop containing nucleotide triphosphate hydrolases"/>
    <property type="match status" value="2"/>
</dbReference>
<dbReference type="HAMAP" id="MF_00195">
    <property type="entry name" value="GTPase_Der"/>
    <property type="match status" value="1"/>
</dbReference>
<dbReference type="InterPro" id="IPR031166">
    <property type="entry name" value="G_ENGA"/>
</dbReference>
<dbReference type="InterPro" id="IPR006073">
    <property type="entry name" value="GTP-bd"/>
</dbReference>
<dbReference type="InterPro" id="IPR016484">
    <property type="entry name" value="GTPase_Der"/>
</dbReference>
<dbReference type="InterPro" id="IPR032859">
    <property type="entry name" value="KH_dom-like"/>
</dbReference>
<dbReference type="InterPro" id="IPR015946">
    <property type="entry name" value="KH_dom-like_a/b"/>
</dbReference>
<dbReference type="InterPro" id="IPR027417">
    <property type="entry name" value="P-loop_NTPase"/>
</dbReference>
<dbReference type="InterPro" id="IPR005225">
    <property type="entry name" value="Small_GTP-bd"/>
</dbReference>
<dbReference type="NCBIfam" id="TIGR03594">
    <property type="entry name" value="GTPase_EngA"/>
    <property type="match status" value="1"/>
</dbReference>
<dbReference type="NCBIfam" id="TIGR00231">
    <property type="entry name" value="small_GTP"/>
    <property type="match status" value="2"/>
</dbReference>
<dbReference type="PANTHER" id="PTHR43834">
    <property type="entry name" value="GTPASE DER"/>
    <property type="match status" value="1"/>
</dbReference>
<dbReference type="PANTHER" id="PTHR43834:SF6">
    <property type="entry name" value="GTPASE DER"/>
    <property type="match status" value="1"/>
</dbReference>
<dbReference type="Pfam" id="PF14714">
    <property type="entry name" value="KH_dom-like"/>
    <property type="match status" value="1"/>
</dbReference>
<dbReference type="Pfam" id="PF01926">
    <property type="entry name" value="MMR_HSR1"/>
    <property type="match status" value="2"/>
</dbReference>
<dbReference type="PIRSF" id="PIRSF006485">
    <property type="entry name" value="GTP-binding_EngA"/>
    <property type="match status" value="1"/>
</dbReference>
<dbReference type="SUPFAM" id="SSF52540">
    <property type="entry name" value="P-loop containing nucleoside triphosphate hydrolases"/>
    <property type="match status" value="2"/>
</dbReference>
<dbReference type="PROSITE" id="PS51712">
    <property type="entry name" value="G_ENGA"/>
    <property type="match status" value="2"/>
</dbReference>
<reference key="1">
    <citation type="submission" date="2008-04" db="EMBL/GenBank/DDBJ databases">
        <title>Complete sequence of chromosome of Natranaerobius thermophilus JW/NM-WN-LF.</title>
        <authorList>
            <consortium name="US DOE Joint Genome Institute"/>
            <person name="Copeland A."/>
            <person name="Lucas S."/>
            <person name="Lapidus A."/>
            <person name="Glavina del Rio T."/>
            <person name="Dalin E."/>
            <person name="Tice H."/>
            <person name="Bruce D."/>
            <person name="Goodwin L."/>
            <person name="Pitluck S."/>
            <person name="Chertkov O."/>
            <person name="Brettin T."/>
            <person name="Detter J.C."/>
            <person name="Han C."/>
            <person name="Kuske C.R."/>
            <person name="Schmutz J."/>
            <person name="Larimer F."/>
            <person name="Land M."/>
            <person name="Hauser L."/>
            <person name="Kyrpides N."/>
            <person name="Lykidis A."/>
            <person name="Mesbah N.M."/>
            <person name="Wiegel J."/>
        </authorList>
    </citation>
    <scope>NUCLEOTIDE SEQUENCE [LARGE SCALE GENOMIC DNA]</scope>
    <source>
        <strain>ATCC BAA-1301 / DSM 18059 / JW/NM-WN-LF</strain>
    </source>
</reference>
<name>DER_NATTJ</name>